<feature type="chain" id="PRO_1000201153" description="Phosphoglucosamine mutase">
    <location>
        <begin position="1"/>
        <end position="445"/>
    </location>
</feature>
<feature type="active site" description="Phosphoserine intermediate" evidence="1">
    <location>
        <position position="102"/>
    </location>
</feature>
<feature type="binding site" description="via phosphate group" evidence="1">
    <location>
        <position position="102"/>
    </location>
    <ligand>
        <name>Mg(2+)</name>
        <dbReference type="ChEBI" id="CHEBI:18420"/>
    </ligand>
</feature>
<feature type="binding site" evidence="1">
    <location>
        <position position="241"/>
    </location>
    <ligand>
        <name>Mg(2+)</name>
        <dbReference type="ChEBI" id="CHEBI:18420"/>
    </ligand>
</feature>
<feature type="binding site" evidence="1">
    <location>
        <position position="243"/>
    </location>
    <ligand>
        <name>Mg(2+)</name>
        <dbReference type="ChEBI" id="CHEBI:18420"/>
    </ligand>
</feature>
<feature type="binding site" evidence="1">
    <location>
        <position position="245"/>
    </location>
    <ligand>
        <name>Mg(2+)</name>
        <dbReference type="ChEBI" id="CHEBI:18420"/>
    </ligand>
</feature>
<feature type="modified residue" description="Phosphoserine" evidence="1">
    <location>
        <position position="102"/>
    </location>
</feature>
<organism>
    <name type="scientific">Aliivibrio fischeri (strain MJ11)</name>
    <name type="common">Vibrio fischeri</name>
    <dbReference type="NCBI Taxonomy" id="388396"/>
    <lineage>
        <taxon>Bacteria</taxon>
        <taxon>Pseudomonadati</taxon>
        <taxon>Pseudomonadota</taxon>
        <taxon>Gammaproteobacteria</taxon>
        <taxon>Vibrionales</taxon>
        <taxon>Vibrionaceae</taxon>
        <taxon>Aliivibrio</taxon>
    </lineage>
</organism>
<comment type="function">
    <text evidence="1">Catalyzes the conversion of glucosamine-6-phosphate to glucosamine-1-phosphate.</text>
</comment>
<comment type="catalytic activity">
    <reaction evidence="1">
        <text>alpha-D-glucosamine 1-phosphate = D-glucosamine 6-phosphate</text>
        <dbReference type="Rhea" id="RHEA:23424"/>
        <dbReference type="ChEBI" id="CHEBI:58516"/>
        <dbReference type="ChEBI" id="CHEBI:58725"/>
        <dbReference type="EC" id="5.4.2.10"/>
    </reaction>
</comment>
<comment type="cofactor">
    <cofactor evidence="1">
        <name>Mg(2+)</name>
        <dbReference type="ChEBI" id="CHEBI:18420"/>
    </cofactor>
    <text evidence="1">Binds 1 Mg(2+) ion per subunit.</text>
</comment>
<comment type="PTM">
    <text evidence="1">Activated by phosphorylation.</text>
</comment>
<comment type="similarity">
    <text evidence="1">Belongs to the phosphohexose mutase family.</text>
</comment>
<reference key="1">
    <citation type="submission" date="2008-08" db="EMBL/GenBank/DDBJ databases">
        <title>Complete sequence of Vibrio fischeri strain MJ11.</title>
        <authorList>
            <person name="Mandel M.J."/>
            <person name="Stabb E.V."/>
            <person name="Ruby E.G."/>
            <person name="Ferriera S."/>
            <person name="Johnson J."/>
            <person name="Kravitz S."/>
            <person name="Beeson K."/>
            <person name="Sutton G."/>
            <person name="Rogers Y.-H."/>
            <person name="Friedman R."/>
            <person name="Frazier M."/>
            <person name="Venter J.C."/>
        </authorList>
    </citation>
    <scope>NUCLEOTIDE SEQUENCE [LARGE SCALE GENOMIC DNA]</scope>
    <source>
        <strain>MJ11</strain>
    </source>
</reference>
<dbReference type="EC" id="5.4.2.10" evidence="1"/>
<dbReference type="EMBL" id="CP001139">
    <property type="protein sequence ID" value="ACH66501.1"/>
    <property type="molecule type" value="Genomic_DNA"/>
</dbReference>
<dbReference type="RefSeq" id="WP_012533775.1">
    <property type="nucleotide sequence ID" value="NC_011184.1"/>
</dbReference>
<dbReference type="SMR" id="B5FA75"/>
<dbReference type="KEGG" id="vfm:VFMJ11_0481"/>
<dbReference type="HOGENOM" id="CLU_016950_7_0_6"/>
<dbReference type="Proteomes" id="UP000001857">
    <property type="component" value="Chromosome I"/>
</dbReference>
<dbReference type="GO" id="GO:0005829">
    <property type="term" value="C:cytosol"/>
    <property type="evidence" value="ECO:0007669"/>
    <property type="project" value="TreeGrafter"/>
</dbReference>
<dbReference type="GO" id="GO:0000287">
    <property type="term" value="F:magnesium ion binding"/>
    <property type="evidence" value="ECO:0007669"/>
    <property type="project" value="UniProtKB-UniRule"/>
</dbReference>
<dbReference type="GO" id="GO:0008966">
    <property type="term" value="F:phosphoglucosamine mutase activity"/>
    <property type="evidence" value="ECO:0007669"/>
    <property type="project" value="UniProtKB-UniRule"/>
</dbReference>
<dbReference type="GO" id="GO:0004615">
    <property type="term" value="F:phosphomannomutase activity"/>
    <property type="evidence" value="ECO:0007669"/>
    <property type="project" value="TreeGrafter"/>
</dbReference>
<dbReference type="GO" id="GO:0005975">
    <property type="term" value="P:carbohydrate metabolic process"/>
    <property type="evidence" value="ECO:0007669"/>
    <property type="project" value="InterPro"/>
</dbReference>
<dbReference type="GO" id="GO:0009252">
    <property type="term" value="P:peptidoglycan biosynthetic process"/>
    <property type="evidence" value="ECO:0007669"/>
    <property type="project" value="TreeGrafter"/>
</dbReference>
<dbReference type="GO" id="GO:0006048">
    <property type="term" value="P:UDP-N-acetylglucosamine biosynthetic process"/>
    <property type="evidence" value="ECO:0007669"/>
    <property type="project" value="TreeGrafter"/>
</dbReference>
<dbReference type="CDD" id="cd05802">
    <property type="entry name" value="GlmM"/>
    <property type="match status" value="1"/>
</dbReference>
<dbReference type="FunFam" id="3.30.310.50:FF:000001">
    <property type="entry name" value="Phosphoglucosamine mutase"/>
    <property type="match status" value="1"/>
</dbReference>
<dbReference type="FunFam" id="3.40.120.10:FF:000001">
    <property type="entry name" value="Phosphoglucosamine mutase"/>
    <property type="match status" value="1"/>
</dbReference>
<dbReference type="FunFam" id="3.40.120.10:FF:000003">
    <property type="entry name" value="Phosphoglucosamine mutase"/>
    <property type="match status" value="1"/>
</dbReference>
<dbReference type="Gene3D" id="3.40.120.10">
    <property type="entry name" value="Alpha-D-Glucose-1,6-Bisphosphate, subunit A, domain 3"/>
    <property type="match status" value="3"/>
</dbReference>
<dbReference type="Gene3D" id="3.30.310.50">
    <property type="entry name" value="Alpha-D-phosphohexomutase, C-terminal domain"/>
    <property type="match status" value="1"/>
</dbReference>
<dbReference type="HAMAP" id="MF_01554_B">
    <property type="entry name" value="GlmM_B"/>
    <property type="match status" value="1"/>
</dbReference>
<dbReference type="InterPro" id="IPR005844">
    <property type="entry name" value="A-D-PHexomutase_a/b/a-I"/>
</dbReference>
<dbReference type="InterPro" id="IPR016055">
    <property type="entry name" value="A-D-PHexomutase_a/b/a-I/II/III"/>
</dbReference>
<dbReference type="InterPro" id="IPR005845">
    <property type="entry name" value="A-D-PHexomutase_a/b/a-II"/>
</dbReference>
<dbReference type="InterPro" id="IPR005846">
    <property type="entry name" value="A-D-PHexomutase_a/b/a-III"/>
</dbReference>
<dbReference type="InterPro" id="IPR005843">
    <property type="entry name" value="A-D-PHexomutase_C"/>
</dbReference>
<dbReference type="InterPro" id="IPR036900">
    <property type="entry name" value="A-D-PHexomutase_C_sf"/>
</dbReference>
<dbReference type="InterPro" id="IPR016066">
    <property type="entry name" value="A-D-PHexomutase_CS"/>
</dbReference>
<dbReference type="InterPro" id="IPR005841">
    <property type="entry name" value="Alpha-D-phosphohexomutase_SF"/>
</dbReference>
<dbReference type="InterPro" id="IPR006352">
    <property type="entry name" value="GlmM_bact"/>
</dbReference>
<dbReference type="InterPro" id="IPR050060">
    <property type="entry name" value="Phosphoglucosamine_mutase"/>
</dbReference>
<dbReference type="NCBIfam" id="TIGR01455">
    <property type="entry name" value="glmM"/>
    <property type="match status" value="1"/>
</dbReference>
<dbReference type="NCBIfam" id="NF008139">
    <property type="entry name" value="PRK10887.1"/>
    <property type="match status" value="1"/>
</dbReference>
<dbReference type="PANTHER" id="PTHR42946:SF1">
    <property type="entry name" value="PHOSPHOGLUCOMUTASE (ALPHA-D-GLUCOSE-1,6-BISPHOSPHATE-DEPENDENT)"/>
    <property type="match status" value="1"/>
</dbReference>
<dbReference type="PANTHER" id="PTHR42946">
    <property type="entry name" value="PHOSPHOHEXOSE MUTASE"/>
    <property type="match status" value="1"/>
</dbReference>
<dbReference type="Pfam" id="PF02878">
    <property type="entry name" value="PGM_PMM_I"/>
    <property type="match status" value="1"/>
</dbReference>
<dbReference type="Pfam" id="PF02879">
    <property type="entry name" value="PGM_PMM_II"/>
    <property type="match status" value="1"/>
</dbReference>
<dbReference type="Pfam" id="PF02880">
    <property type="entry name" value="PGM_PMM_III"/>
    <property type="match status" value="1"/>
</dbReference>
<dbReference type="Pfam" id="PF00408">
    <property type="entry name" value="PGM_PMM_IV"/>
    <property type="match status" value="1"/>
</dbReference>
<dbReference type="PRINTS" id="PR00509">
    <property type="entry name" value="PGMPMM"/>
</dbReference>
<dbReference type="SUPFAM" id="SSF55957">
    <property type="entry name" value="Phosphoglucomutase, C-terminal domain"/>
    <property type="match status" value="1"/>
</dbReference>
<dbReference type="SUPFAM" id="SSF53738">
    <property type="entry name" value="Phosphoglucomutase, first 3 domains"/>
    <property type="match status" value="3"/>
</dbReference>
<dbReference type="PROSITE" id="PS00710">
    <property type="entry name" value="PGM_PMM"/>
    <property type="match status" value="1"/>
</dbReference>
<sequence length="445" mass="47616">MAERKYFGTDGVRGLVGQAPITPDFVMKLGWAAGQVLAKQGTKKVIIGKDTRISGYMLESALEAGLAAAGLQAKFTGPMPTPAVAYLTQTFRAEAGIVISASHNPYYDNGIKFFSSEGTKLPDDVEMAIEAELDKPMTCVESALLGKASRLNDAAGRYIEFCKSTFPKELSLAGLKIVIDCANGATYHIAPNVFKELGAEIITIGCEPNGTNINHEVGATDVRALQAKVVEEKADFGVAFDGDGDRIIMVDEFGEKVDGDQIAYIIARDALRRGELKGGVVGTLMTNMGMEVALRNLGIPFVRSDVGDRYVMEKLLENNWLIGAENSGHVILLDKVTTGDAIVAALQVIASIVGSKMSLKELCDGMSMFPQILVNVRFAGDNDPLESEAVKAAQADVEAKLGDNGRVLLRKSGTEPLIRVMVEGEDAELVTQYAQQIADAVKESC</sequence>
<evidence type="ECO:0000255" key="1">
    <source>
        <dbReference type="HAMAP-Rule" id="MF_01554"/>
    </source>
</evidence>
<accession>B5FA75</accession>
<gene>
    <name evidence="1" type="primary">glmM</name>
    <name type="ordered locus">VFMJ11_0481</name>
</gene>
<protein>
    <recommendedName>
        <fullName evidence="1">Phosphoglucosamine mutase</fullName>
        <ecNumber evidence="1">5.4.2.10</ecNumber>
    </recommendedName>
</protein>
<keyword id="KW-0413">Isomerase</keyword>
<keyword id="KW-0460">Magnesium</keyword>
<keyword id="KW-0479">Metal-binding</keyword>
<keyword id="KW-0597">Phosphoprotein</keyword>
<name>GLMM_ALIFM</name>
<proteinExistence type="inferred from homology"/>